<accession>Q65GD3</accession>
<accession>Q62RT7</accession>
<gene>
    <name evidence="1" type="primary">pheT</name>
    <name type="ordered locus">BLi03015</name>
    <name type="ordered locus">BL00339</name>
</gene>
<sequence>MFVSYKWLQEYVNLDGMTPEILAEKITRSGIEVEGIEYKGEGIKGVVIGHVLEREQHPNADKLNKCLVDIGEEEPVQIICGAPNVDKGQKVAVATVGAVLPGNFKIKKAKLRGEASNGMICSLQELGIQGKLVPKEYAEGIFVFPGDAETGADALQSLALDDAVLELGLTPNRADAMNMLGVAYEVAAILGREVKLPETAYQAGAEKAADYISVKIEDPEANPLYAAKIIKDVKIGPSPLWMQTKLINAGIRPHNNVVDVTNFVLLEYGQPLHAFDYDRFGSKEVVIRKAYENETITTLDEQERTLTTEHLVITNGSSPQAVAGVMGGAESEVREDTATVLLEAAYFNGQTVRKASKDLGLRSESSVRFEKGIDPARVRLAAERAADLISRYAGGTVLEGTVEENHLDIKENVIRLSVDKVTKVLGMSISKEEMVNIFERLGFAVEDAERELVVTVPSRRGDIAIEEDLIEEVARLYGYDNIPSTLPEVTGFAGGLTPYQDKRRKVRRFLEGAGLSQAITYSLTNDKKATAYALEKSFKTILSLPMSEERSVLRHSLLPNLLDSVAYNLARQADSAAFYEIGSVFLKAEEHTKPVEKEHVAGAVTGLWHKNLWQGEKKPVDFFVVKGIVEGLLEKLGITEGIEFAQSERKELHPGRTANILHNGSLVGFIGQLHPSVEKELDLSDTYVFELDLHELLRLDVPEITYTPIPKYPSVTRDIALVVDKQTTAGQLEDVIKTAGGKWLKEVHVFDVYEGEHMEEGKKSVAFSLQYLNPEQTLTEEEVTKVHDQVLKALEDKYQAVLRG</sequence>
<reference key="1">
    <citation type="journal article" date="2004" name="J. Mol. Microbiol. Biotechnol.">
        <title>The complete genome sequence of Bacillus licheniformis DSM13, an organism with great industrial potential.</title>
        <authorList>
            <person name="Veith B."/>
            <person name="Herzberg C."/>
            <person name="Steckel S."/>
            <person name="Feesche J."/>
            <person name="Maurer K.H."/>
            <person name="Ehrenreich P."/>
            <person name="Baeumer S."/>
            <person name="Henne A."/>
            <person name="Liesegang H."/>
            <person name="Merkl R."/>
            <person name="Ehrenreich A."/>
            <person name="Gottschalk G."/>
        </authorList>
    </citation>
    <scope>NUCLEOTIDE SEQUENCE [LARGE SCALE GENOMIC DNA]</scope>
    <source>
        <strain>ATCC 14580 / DSM 13 / JCM 2505 / CCUG 7422 / NBRC 12200 / NCIMB 9375 / NCTC 10341 / NRRL NRS-1264 / Gibson 46</strain>
    </source>
</reference>
<reference key="2">
    <citation type="journal article" date="2004" name="Genome Biol.">
        <title>Complete genome sequence of the industrial bacterium Bacillus licheniformis and comparisons with closely related Bacillus species.</title>
        <authorList>
            <person name="Rey M.W."/>
            <person name="Ramaiya P."/>
            <person name="Nelson B.A."/>
            <person name="Brody-Karpin S.D."/>
            <person name="Zaretsky E.J."/>
            <person name="Tang M."/>
            <person name="Lopez de Leon A."/>
            <person name="Xiang H."/>
            <person name="Gusti V."/>
            <person name="Clausen I.G."/>
            <person name="Olsen P.B."/>
            <person name="Rasmussen M.D."/>
            <person name="Andersen J.T."/>
            <person name="Joergensen P.L."/>
            <person name="Larsen T.S."/>
            <person name="Sorokin A."/>
            <person name="Bolotin A."/>
            <person name="Lapidus A."/>
            <person name="Galleron N."/>
            <person name="Ehrlich S.D."/>
            <person name="Berka R.M."/>
        </authorList>
    </citation>
    <scope>NUCLEOTIDE SEQUENCE [LARGE SCALE GENOMIC DNA]</scope>
    <source>
        <strain>ATCC 14580 / DSM 13 / JCM 2505 / CCUG 7422 / NBRC 12200 / NCIMB 9375 / NCTC 10341 / NRRL NRS-1264 / Gibson 46</strain>
    </source>
</reference>
<name>SYFB_BACLD</name>
<evidence type="ECO:0000255" key="1">
    <source>
        <dbReference type="HAMAP-Rule" id="MF_00283"/>
    </source>
</evidence>
<organism>
    <name type="scientific">Bacillus licheniformis (strain ATCC 14580 / DSM 13 / JCM 2505 / CCUG 7422 / NBRC 12200 / NCIMB 9375 / NCTC 10341 / NRRL NRS-1264 / Gibson 46)</name>
    <dbReference type="NCBI Taxonomy" id="279010"/>
    <lineage>
        <taxon>Bacteria</taxon>
        <taxon>Bacillati</taxon>
        <taxon>Bacillota</taxon>
        <taxon>Bacilli</taxon>
        <taxon>Bacillales</taxon>
        <taxon>Bacillaceae</taxon>
        <taxon>Bacillus</taxon>
    </lineage>
</organism>
<feature type="chain" id="PRO_0000232045" description="Phenylalanine--tRNA ligase beta subunit">
    <location>
        <begin position="1"/>
        <end position="804"/>
    </location>
</feature>
<feature type="domain" description="tRNA-binding" evidence="1">
    <location>
        <begin position="40"/>
        <end position="155"/>
    </location>
</feature>
<feature type="domain" description="B5" evidence="1">
    <location>
        <begin position="409"/>
        <end position="484"/>
    </location>
</feature>
<feature type="domain" description="FDX-ACB" evidence="1">
    <location>
        <begin position="710"/>
        <end position="803"/>
    </location>
</feature>
<feature type="binding site" evidence="1">
    <location>
        <position position="462"/>
    </location>
    <ligand>
        <name>Mg(2+)</name>
        <dbReference type="ChEBI" id="CHEBI:18420"/>
        <note>shared with alpha subunit</note>
    </ligand>
</feature>
<feature type="binding site" evidence="1">
    <location>
        <position position="468"/>
    </location>
    <ligand>
        <name>Mg(2+)</name>
        <dbReference type="ChEBI" id="CHEBI:18420"/>
        <note>shared with alpha subunit</note>
    </ligand>
</feature>
<feature type="binding site" evidence="1">
    <location>
        <position position="471"/>
    </location>
    <ligand>
        <name>Mg(2+)</name>
        <dbReference type="ChEBI" id="CHEBI:18420"/>
        <note>shared with alpha subunit</note>
    </ligand>
</feature>
<feature type="binding site" evidence="1">
    <location>
        <position position="472"/>
    </location>
    <ligand>
        <name>Mg(2+)</name>
        <dbReference type="ChEBI" id="CHEBI:18420"/>
        <note>shared with alpha subunit</note>
    </ligand>
</feature>
<comment type="catalytic activity">
    <reaction evidence="1">
        <text>tRNA(Phe) + L-phenylalanine + ATP = L-phenylalanyl-tRNA(Phe) + AMP + diphosphate + H(+)</text>
        <dbReference type="Rhea" id="RHEA:19413"/>
        <dbReference type="Rhea" id="RHEA-COMP:9668"/>
        <dbReference type="Rhea" id="RHEA-COMP:9699"/>
        <dbReference type="ChEBI" id="CHEBI:15378"/>
        <dbReference type="ChEBI" id="CHEBI:30616"/>
        <dbReference type="ChEBI" id="CHEBI:33019"/>
        <dbReference type="ChEBI" id="CHEBI:58095"/>
        <dbReference type="ChEBI" id="CHEBI:78442"/>
        <dbReference type="ChEBI" id="CHEBI:78531"/>
        <dbReference type="ChEBI" id="CHEBI:456215"/>
        <dbReference type="EC" id="6.1.1.20"/>
    </reaction>
</comment>
<comment type="cofactor">
    <cofactor evidence="1">
        <name>Mg(2+)</name>
        <dbReference type="ChEBI" id="CHEBI:18420"/>
    </cofactor>
    <text evidence="1">Binds 2 magnesium ions per tetramer.</text>
</comment>
<comment type="subunit">
    <text evidence="1">Tetramer of two alpha and two beta subunits.</text>
</comment>
<comment type="subcellular location">
    <subcellularLocation>
        <location evidence="1">Cytoplasm</location>
    </subcellularLocation>
</comment>
<comment type="similarity">
    <text evidence="1">Belongs to the phenylalanyl-tRNA synthetase beta subunit family. Type 1 subfamily.</text>
</comment>
<protein>
    <recommendedName>
        <fullName evidence="1">Phenylalanine--tRNA ligase beta subunit</fullName>
        <ecNumber evidence="1">6.1.1.20</ecNumber>
    </recommendedName>
    <alternativeName>
        <fullName evidence="1">Phenylalanyl-tRNA synthetase beta subunit</fullName>
        <shortName evidence="1">PheRS</shortName>
    </alternativeName>
</protein>
<proteinExistence type="inferred from homology"/>
<dbReference type="EC" id="6.1.1.20" evidence="1"/>
<dbReference type="EMBL" id="AE017333">
    <property type="protein sequence ID" value="AAU41881.1"/>
    <property type="molecule type" value="Genomic_DNA"/>
</dbReference>
<dbReference type="EMBL" id="CP000002">
    <property type="protein sequence ID" value="AAU24523.1"/>
    <property type="molecule type" value="Genomic_DNA"/>
</dbReference>
<dbReference type="RefSeq" id="WP_009329342.1">
    <property type="nucleotide sequence ID" value="NC_006322.1"/>
</dbReference>
<dbReference type="SMR" id="Q65GD3"/>
<dbReference type="STRING" id="279010.BL00339"/>
<dbReference type="GeneID" id="92860391"/>
<dbReference type="KEGG" id="bld:BLi03015"/>
<dbReference type="KEGG" id="bli:BL00339"/>
<dbReference type="PATRIC" id="fig|279010.13.peg.3076"/>
<dbReference type="eggNOG" id="COG0072">
    <property type="taxonomic scope" value="Bacteria"/>
</dbReference>
<dbReference type="eggNOG" id="COG0073">
    <property type="taxonomic scope" value="Bacteria"/>
</dbReference>
<dbReference type="HOGENOM" id="CLU_016891_0_0_9"/>
<dbReference type="Proteomes" id="UP000000606">
    <property type="component" value="Chromosome"/>
</dbReference>
<dbReference type="GO" id="GO:0009328">
    <property type="term" value="C:phenylalanine-tRNA ligase complex"/>
    <property type="evidence" value="ECO:0007669"/>
    <property type="project" value="TreeGrafter"/>
</dbReference>
<dbReference type="GO" id="GO:0005524">
    <property type="term" value="F:ATP binding"/>
    <property type="evidence" value="ECO:0007669"/>
    <property type="project" value="UniProtKB-UniRule"/>
</dbReference>
<dbReference type="GO" id="GO:0140096">
    <property type="term" value="F:catalytic activity, acting on a protein"/>
    <property type="evidence" value="ECO:0007669"/>
    <property type="project" value="UniProtKB-ARBA"/>
</dbReference>
<dbReference type="GO" id="GO:0000287">
    <property type="term" value="F:magnesium ion binding"/>
    <property type="evidence" value="ECO:0007669"/>
    <property type="project" value="UniProtKB-UniRule"/>
</dbReference>
<dbReference type="GO" id="GO:0004826">
    <property type="term" value="F:phenylalanine-tRNA ligase activity"/>
    <property type="evidence" value="ECO:0007669"/>
    <property type="project" value="UniProtKB-UniRule"/>
</dbReference>
<dbReference type="GO" id="GO:0016740">
    <property type="term" value="F:transferase activity"/>
    <property type="evidence" value="ECO:0007669"/>
    <property type="project" value="UniProtKB-ARBA"/>
</dbReference>
<dbReference type="GO" id="GO:0000049">
    <property type="term" value="F:tRNA binding"/>
    <property type="evidence" value="ECO:0007669"/>
    <property type="project" value="UniProtKB-KW"/>
</dbReference>
<dbReference type="GO" id="GO:0006432">
    <property type="term" value="P:phenylalanyl-tRNA aminoacylation"/>
    <property type="evidence" value="ECO:0007669"/>
    <property type="project" value="UniProtKB-UniRule"/>
</dbReference>
<dbReference type="CDD" id="cd00769">
    <property type="entry name" value="PheRS_beta_core"/>
    <property type="match status" value="1"/>
</dbReference>
<dbReference type="CDD" id="cd02796">
    <property type="entry name" value="tRNA_bind_bactPheRS"/>
    <property type="match status" value="1"/>
</dbReference>
<dbReference type="FunFam" id="2.40.50.140:FF:000045">
    <property type="entry name" value="Phenylalanine--tRNA ligase beta subunit"/>
    <property type="match status" value="1"/>
</dbReference>
<dbReference type="FunFam" id="3.30.56.10:FF:000002">
    <property type="entry name" value="Phenylalanine--tRNA ligase beta subunit"/>
    <property type="match status" value="1"/>
</dbReference>
<dbReference type="FunFam" id="3.30.70.380:FF:000001">
    <property type="entry name" value="Phenylalanine--tRNA ligase beta subunit"/>
    <property type="match status" value="1"/>
</dbReference>
<dbReference type="FunFam" id="3.30.930.10:FF:000022">
    <property type="entry name" value="Phenylalanine--tRNA ligase beta subunit"/>
    <property type="match status" value="1"/>
</dbReference>
<dbReference type="FunFam" id="3.50.40.10:FF:000001">
    <property type="entry name" value="Phenylalanine--tRNA ligase beta subunit"/>
    <property type="match status" value="1"/>
</dbReference>
<dbReference type="Gene3D" id="3.30.56.10">
    <property type="match status" value="2"/>
</dbReference>
<dbReference type="Gene3D" id="3.30.930.10">
    <property type="entry name" value="Bira Bifunctional Protein, Domain 2"/>
    <property type="match status" value="1"/>
</dbReference>
<dbReference type="Gene3D" id="3.30.70.380">
    <property type="entry name" value="Ferrodoxin-fold anticodon-binding domain"/>
    <property type="match status" value="1"/>
</dbReference>
<dbReference type="Gene3D" id="2.40.50.140">
    <property type="entry name" value="Nucleic acid-binding proteins"/>
    <property type="match status" value="1"/>
</dbReference>
<dbReference type="Gene3D" id="3.50.40.10">
    <property type="entry name" value="Phenylalanyl-trna Synthetase, Chain B, domain 3"/>
    <property type="match status" value="1"/>
</dbReference>
<dbReference type="HAMAP" id="MF_00283">
    <property type="entry name" value="Phe_tRNA_synth_beta1"/>
    <property type="match status" value="1"/>
</dbReference>
<dbReference type="InterPro" id="IPR045864">
    <property type="entry name" value="aa-tRNA-synth_II/BPL/LPL"/>
</dbReference>
<dbReference type="InterPro" id="IPR005146">
    <property type="entry name" value="B3/B4_tRNA-bd"/>
</dbReference>
<dbReference type="InterPro" id="IPR009061">
    <property type="entry name" value="DNA-bd_dom_put_sf"/>
</dbReference>
<dbReference type="InterPro" id="IPR005121">
    <property type="entry name" value="Fdx_antiC-bd"/>
</dbReference>
<dbReference type="InterPro" id="IPR036690">
    <property type="entry name" value="Fdx_antiC-bd_sf"/>
</dbReference>
<dbReference type="InterPro" id="IPR012340">
    <property type="entry name" value="NA-bd_OB-fold"/>
</dbReference>
<dbReference type="InterPro" id="IPR045060">
    <property type="entry name" value="Phe-tRNA-ligase_IIc_bsu"/>
</dbReference>
<dbReference type="InterPro" id="IPR004532">
    <property type="entry name" value="Phe-tRNA-ligase_IIc_bsu_bact"/>
</dbReference>
<dbReference type="InterPro" id="IPR020825">
    <property type="entry name" value="Phe-tRNA_synthase-like_B3/B4"/>
</dbReference>
<dbReference type="InterPro" id="IPR041616">
    <property type="entry name" value="PheRS_beta_core"/>
</dbReference>
<dbReference type="InterPro" id="IPR002547">
    <property type="entry name" value="tRNA-bd_dom"/>
</dbReference>
<dbReference type="InterPro" id="IPR033714">
    <property type="entry name" value="tRNA_bind_bactPheRS"/>
</dbReference>
<dbReference type="InterPro" id="IPR005147">
    <property type="entry name" value="tRNA_synthase_B5-dom"/>
</dbReference>
<dbReference type="NCBIfam" id="TIGR00472">
    <property type="entry name" value="pheT_bact"/>
    <property type="match status" value="1"/>
</dbReference>
<dbReference type="NCBIfam" id="NF045760">
    <property type="entry name" value="YtpR"/>
    <property type="match status" value="1"/>
</dbReference>
<dbReference type="PANTHER" id="PTHR10947:SF0">
    <property type="entry name" value="PHENYLALANINE--TRNA LIGASE BETA SUBUNIT"/>
    <property type="match status" value="1"/>
</dbReference>
<dbReference type="PANTHER" id="PTHR10947">
    <property type="entry name" value="PHENYLALANYL-TRNA SYNTHETASE BETA CHAIN AND LEUCINE-RICH REPEAT-CONTAINING PROTEIN 47"/>
    <property type="match status" value="1"/>
</dbReference>
<dbReference type="Pfam" id="PF03483">
    <property type="entry name" value="B3_4"/>
    <property type="match status" value="1"/>
</dbReference>
<dbReference type="Pfam" id="PF03484">
    <property type="entry name" value="B5"/>
    <property type="match status" value="1"/>
</dbReference>
<dbReference type="Pfam" id="PF03147">
    <property type="entry name" value="FDX-ACB"/>
    <property type="match status" value="1"/>
</dbReference>
<dbReference type="Pfam" id="PF01588">
    <property type="entry name" value="tRNA_bind"/>
    <property type="match status" value="1"/>
</dbReference>
<dbReference type="Pfam" id="PF17759">
    <property type="entry name" value="tRNA_synthFbeta"/>
    <property type="match status" value="1"/>
</dbReference>
<dbReference type="SMART" id="SM00873">
    <property type="entry name" value="B3_4"/>
    <property type="match status" value="1"/>
</dbReference>
<dbReference type="SMART" id="SM00874">
    <property type="entry name" value="B5"/>
    <property type="match status" value="1"/>
</dbReference>
<dbReference type="SMART" id="SM00896">
    <property type="entry name" value="FDX-ACB"/>
    <property type="match status" value="1"/>
</dbReference>
<dbReference type="SUPFAM" id="SSF54991">
    <property type="entry name" value="Anticodon-binding domain of PheRS"/>
    <property type="match status" value="1"/>
</dbReference>
<dbReference type="SUPFAM" id="SSF55681">
    <property type="entry name" value="Class II aaRS and biotin synthetases"/>
    <property type="match status" value="1"/>
</dbReference>
<dbReference type="SUPFAM" id="SSF50249">
    <property type="entry name" value="Nucleic acid-binding proteins"/>
    <property type="match status" value="1"/>
</dbReference>
<dbReference type="SUPFAM" id="SSF56037">
    <property type="entry name" value="PheT/TilS domain"/>
    <property type="match status" value="1"/>
</dbReference>
<dbReference type="SUPFAM" id="SSF46955">
    <property type="entry name" value="Putative DNA-binding domain"/>
    <property type="match status" value="1"/>
</dbReference>
<dbReference type="PROSITE" id="PS51483">
    <property type="entry name" value="B5"/>
    <property type="match status" value="1"/>
</dbReference>
<dbReference type="PROSITE" id="PS51447">
    <property type="entry name" value="FDX_ACB"/>
    <property type="match status" value="1"/>
</dbReference>
<dbReference type="PROSITE" id="PS50886">
    <property type="entry name" value="TRBD"/>
    <property type="match status" value="1"/>
</dbReference>
<keyword id="KW-0030">Aminoacyl-tRNA synthetase</keyword>
<keyword id="KW-0067">ATP-binding</keyword>
<keyword id="KW-0963">Cytoplasm</keyword>
<keyword id="KW-0436">Ligase</keyword>
<keyword id="KW-0460">Magnesium</keyword>
<keyword id="KW-0479">Metal-binding</keyword>
<keyword id="KW-0547">Nucleotide-binding</keyword>
<keyword id="KW-0648">Protein biosynthesis</keyword>
<keyword id="KW-1185">Reference proteome</keyword>
<keyword id="KW-0694">RNA-binding</keyword>
<keyword id="KW-0820">tRNA-binding</keyword>